<dbReference type="EC" id="2.7.1.35" evidence="1"/>
<dbReference type="EMBL" id="CP000034">
    <property type="protein sequence ID" value="ABB62670.1"/>
    <property type="molecule type" value="Genomic_DNA"/>
</dbReference>
<dbReference type="RefSeq" id="WP_000096652.1">
    <property type="nucleotide sequence ID" value="NC_007606.1"/>
</dbReference>
<dbReference type="RefSeq" id="YP_404161.1">
    <property type="nucleotide sequence ID" value="NC_007606.1"/>
</dbReference>
<dbReference type="SMR" id="Q32DD5"/>
<dbReference type="STRING" id="300267.SDY_2615"/>
<dbReference type="EnsemblBacteria" id="ABB62670">
    <property type="protein sequence ID" value="ABB62670"/>
    <property type="gene ID" value="SDY_2615"/>
</dbReference>
<dbReference type="KEGG" id="sdy:SDY_2615"/>
<dbReference type="PATRIC" id="fig|300267.13.peg.3152"/>
<dbReference type="HOGENOM" id="CLU_046496_3_1_6"/>
<dbReference type="UniPathway" id="UPA01068">
    <property type="reaction ID" value="UER00298"/>
</dbReference>
<dbReference type="UniPathway" id="UPA01068">
    <property type="reaction ID" value="UER00299"/>
</dbReference>
<dbReference type="UniPathway" id="UPA01068">
    <property type="reaction ID" value="UER00300"/>
</dbReference>
<dbReference type="Proteomes" id="UP000002716">
    <property type="component" value="Chromosome"/>
</dbReference>
<dbReference type="GO" id="GO:0005829">
    <property type="term" value="C:cytosol"/>
    <property type="evidence" value="ECO:0007669"/>
    <property type="project" value="TreeGrafter"/>
</dbReference>
<dbReference type="GO" id="GO:0005524">
    <property type="term" value="F:ATP binding"/>
    <property type="evidence" value="ECO:0007669"/>
    <property type="project" value="UniProtKB-UniRule"/>
</dbReference>
<dbReference type="GO" id="GO:0008902">
    <property type="term" value="F:hydroxymethylpyrimidine kinase activity"/>
    <property type="evidence" value="ECO:0007669"/>
    <property type="project" value="TreeGrafter"/>
</dbReference>
<dbReference type="GO" id="GO:0000287">
    <property type="term" value="F:magnesium ion binding"/>
    <property type="evidence" value="ECO:0007669"/>
    <property type="project" value="UniProtKB-UniRule"/>
</dbReference>
<dbReference type="GO" id="GO:0008478">
    <property type="term" value="F:pyridoxal kinase activity"/>
    <property type="evidence" value="ECO:0007669"/>
    <property type="project" value="UniProtKB-UniRule"/>
</dbReference>
<dbReference type="GO" id="GO:0008270">
    <property type="term" value="F:zinc ion binding"/>
    <property type="evidence" value="ECO:0007669"/>
    <property type="project" value="UniProtKB-UniRule"/>
</dbReference>
<dbReference type="GO" id="GO:0009443">
    <property type="term" value="P:pyridoxal 5'-phosphate salvage"/>
    <property type="evidence" value="ECO:0007669"/>
    <property type="project" value="UniProtKB-UniRule"/>
</dbReference>
<dbReference type="CDD" id="cd01173">
    <property type="entry name" value="pyridoxal_pyridoxamine_kinase"/>
    <property type="match status" value="1"/>
</dbReference>
<dbReference type="FunFam" id="3.40.1190.20:FF:000009">
    <property type="entry name" value="Pyridoxine/pyridoxal/pyridoxamine kinase"/>
    <property type="match status" value="1"/>
</dbReference>
<dbReference type="Gene3D" id="3.40.1190.20">
    <property type="match status" value="1"/>
</dbReference>
<dbReference type="HAMAP" id="MF_01638">
    <property type="entry name" value="PdxK"/>
    <property type="match status" value="1"/>
</dbReference>
<dbReference type="InterPro" id="IPR023479">
    <property type="entry name" value="PdxK"/>
</dbReference>
<dbReference type="InterPro" id="IPR013749">
    <property type="entry name" value="PM/HMP-P_kinase-1"/>
</dbReference>
<dbReference type="InterPro" id="IPR004625">
    <property type="entry name" value="PyrdxlKinase"/>
</dbReference>
<dbReference type="InterPro" id="IPR029056">
    <property type="entry name" value="Ribokinase-like"/>
</dbReference>
<dbReference type="NCBIfam" id="NF006034">
    <property type="entry name" value="PRK08176.1"/>
    <property type="match status" value="1"/>
</dbReference>
<dbReference type="NCBIfam" id="TIGR00687">
    <property type="entry name" value="pyridox_kin"/>
    <property type="match status" value="1"/>
</dbReference>
<dbReference type="PANTHER" id="PTHR10534">
    <property type="entry name" value="PYRIDOXAL KINASE"/>
    <property type="match status" value="1"/>
</dbReference>
<dbReference type="PANTHER" id="PTHR10534:SF15">
    <property type="entry name" value="PYRIDOXINE_PYRIDOXAL_PYRIDOXAMINE KINASE"/>
    <property type="match status" value="1"/>
</dbReference>
<dbReference type="Pfam" id="PF08543">
    <property type="entry name" value="Phos_pyr_kin"/>
    <property type="match status" value="1"/>
</dbReference>
<dbReference type="SUPFAM" id="SSF53613">
    <property type="entry name" value="Ribokinase-like"/>
    <property type="match status" value="1"/>
</dbReference>
<comment type="function">
    <text evidence="1">B6-vitamer kinase involved in the salvage pathway of pyridoxal 5'-phosphate (PLP). Catalyzes the phosphorylation of pyridoxine (PN), pyridoxal (PL), and pyridoxamine (PM), forming their respective 5'-phosphorylated esters, i.e. PNP, PLP and PMP.</text>
</comment>
<comment type="catalytic activity">
    <reaction evidence="1">
        <text>pyridoxal + ATP = pyridoxal 5'-phosphate + ADP + H(+)</text>
        <dbReference type="Rhea" id="RHEA:10224"/>
        <dbReference type="ChEBI" id="CHEBI:15378"/>
        <dbReference type="ChEBI" id="CHEBI:17310"/>
        <dbReference type="ChEBI" id="CHEBI:30616"/>
        <dbReference type="ChEBI" id="CHEBI:456216"/>
        <dbReference type="ChEBI" id="CHEBI:597326"/>
        <dbReference type="EC" id="2.7.1.35"/>
    </reaction>
</comment>
<comment type="catalytic activity">
    <reaction evidence="1">
        <text>pyridoxine + ATP = pyridoxine 5'-phosphate + ADP + H(+)</text>
        <dbReference type="Rhea" id="RHEA:25108"/>
        <dbReference type="ChEBI" id="CHEBI:15378"/>
        <dbReference type="ChEBI" id="CHEBI:16709"/>
        <dbReference type="ChEBI" id="CHEBI:30616"/>
        <dbReference type="ChEBI" id="CHEBI:58589"/>
        <dbReference type="ChEBI" id="CHEBI:456216"/>
        <dbReference type="EC" id="2.7.1.35"/>
    </reaction>
</comment>
<comment type="catalytic activity">
    <reaction evidence="1">
        <text>pyridoxamine + ATP = pyridoxamine 5'-phosphate + ADP + H(+)</text>
        <dbReference type="Rhea" id="RHEA:25104"/>
        <dbReference type="ChEBI" id="CHEBI:15378"/>
        <dbReference type="ChEBI" id="CHEBI:30616"/>
        <dbReference type="ChEBI" id="CHEBI:57761"/>
        <dbReference type="ChEBI" id="CHEBI:58451"/>
        <dbReference type="ChEBI" id="CHEBI:456216"/>
        <dbReference type="EC" id="2.7.1.35"/>
    </reaction>
</comment>
<comment type="cofactor">
    <cofactor evidence="1">
        <name>Mg(2+)</name>
        <dbReference type="ChEBI" id="CHEBI:18420"/>
    </cofactor>
</comment>
<comment type="pathway">
    <text evidence="1">Cofactor metabolism; pyridoxal 5'-phosphate salvage; pyridoxal 5'-phosphate from pyridoxal: step 1/1.</text>
</comment>
<comment type="pathway">
    <text evidence="1">Cofactor metabolism; pyridoxal 5'-phosphate salvage; pyridoxine 5'-phosphate from pyridoxine: step 1/1.</text>
</comment>
<comment type="pathway">
    <text evidence="1">Cofactor metabolism; pyridoxal 5'-phosphate salvage; pyridoxamine 5'-phosphate from pyridoxamine: step 1/1.</text>
</comment>
<comment type="subunit">
    <text evidence="1">Homodimer.</text>
</comment>
<comment type="similarity">
    <text evidence="1">Belongs to the pyridoxine kinase family. PdxK subfamily.</text>
</comment>
<organism>
    <name type="scientific">Shigella dysenteriae serotype 1 (strain Sd197)</name>
    <dbReference type="NCBI Taxonomy" id="300267"/>
    <lineage>
        <taxon>Bacteria</taxon>
        <taxon>Pseudomonadati</taxon>
        <taxon>Pseudomonadota</taxon>
        <taxon>Gammaproteobacteria</taxon>
        <taxon>Enterobacterales</taxon>
        <taxon>Enterobacteriaceae</taxon>
        <taxon>Shigella</taxon>
    </lineage>
</organism>
<gene>
    <name evidence="1" type="primary">pdxK</name>
    <name type="ordered locus">SDY_2615</name>
</gene>
<accession>Q32DD5</accession>
<feature type="chain" id="PRO_0000268842" description="Pyridoxine/pyridoxal/pyridoxamine kinase">
    <location>
        <begin position="1"/>
        <end position="283"/>
    </location>
</feature>
<feature type="binding site" evidence="1">
    <location>
        <position position="23"/>
    </location>
    <ligand>
        <name>substrate</name>
    </ligand>
</feature>
<feature type="binding site" evidence="1">
    <location>
        <position position="59"/>
    </location>
    <ligand>
        <name>substrate</name>
    </ligand>
</feature>
<feature type="binding site" evidence="1">
    <location>
        <position position="125"/>
    </location>
    <ligand>
        <name>ATP</name>
        <dbReference type="ChEBI" id="CHEBI:30616"/>
    </ligand>
</feature>
<feature type="binding site" evidence="1">
    <location>
        <position position="136"/>
    </location>
    <ligand>
        <name>Mg(2+)</name>
        <dbReference type="ChEBI" id="CHEBI:18420"/>
    </ligand>
</feature>
<feature type="binding site" evidence="1">
    <location>
        <position position="157"/>
    </location>
    <ligand>
        <name>ATP</name>
        <dbReference type="ChEBI" id="CHEBI:30616"/>
    </ligand>
</feature>
<feature type="binding site" evidence="1">
    <location>
        <position position="162"/>
    </location>
    <ligand>
        <name>ATP</name>
        <dbReference type="ChEBI" id="CHEBI:30616"/>
    </ligand>
</feature>
<feature type="binding site" evidence="1">
    <location>
        <position position="162"/>
    </location>
    <ligand>
        <name>Mg(2+)</name>
        <dbReference type="ChEBI" id="CHEBI:18420"/>
    </ligand>
</feature>
<feature type="binding site" evidence="1">
    <location>
        <position position="195"/>
    </location>
    <ligand>
        <name>ATP</name>
        <dbReference type="ChEBI" id="CHEBI:30616"/>
    </ligand>
</feature>
<feature type="binding site" evidence="1">
    <location>
        <begin position="221"/>
        <end position="224"/>
    </location>
    <ligand>
        <name>ATP</name>
        <dbReference type="ChEBI" id="CHEBI:30616"/>
    </ligand>
</feature>
<feature type="binding site" evidence="1">
    <location>
        <position position="231"/>
    </location>
    <ligand>
        <name>ATP</name>
        <dbReference type="ChEBI" id="CHEBI:30616"/>
    </ligand>
</feature>
<feature type="binding site" evidence="1">
    <location>
        <position position="233"/>
    </location>
    <ligand>
        <name>substrate</name>
    </ligand>
</feature>
<protein>
    <recommendedName>
        <fullName evidence="1">Pyridoxine/pyridoxal/pyridoxamine kinase</fullName>
        <shortName evidence="1">PN/PL/PM kinase</shortName>
        <ecNumber evidence="1">2.7.1.35</ecNumber>
    </recommendedName>
    <alternativeName>
        <fullName evidence="1">B6-vitamer kinase</fullName>
    </alternativeName>
</protein>
<keyword id="KW-0067">ATP-binding</keyword>
<keyword id="KW-0418">Kinase</keyword>
<keyword id="KW-0460">Magnesium</keyword>
<keyword id="KW-0479">Metal-binding</keyword>
<keyword id="KW-0547">Nucleotide-binding</keyword>
<keyword id="KW-1185">Reference proteome</keyword>
<keyword id="KW-0808">Transferase</keyword>
<keyword id="KW-0862">Zinc</keyword>
<sequence length="283" mass="30832">MSSLLLFNDKSRALQADIVAVQSQVVYGSVGNSIAVPAIKQNGLNVFAVPTVLLSNTPHYDTFYGGAIPDEWFSGYLRALQERDALRQLRAVTTGYMGTASQIKILAEWLTALRKDHPDLLIMVDPVIGDIDSGIYVKPDLPEAYRQYLLPLAQGITPNIFELEILTGKNCRDLDSAIAAAKSLLSDTLKWVVITSASGNEENQEMQVAVVSADSVNVISHSRVKTDLKGTGDLFCAQLISGLLKGKALNDAVHRAGLRVLEVMRYTQQHESDELILPPLAEA</sequence>
<evidence type="ECO:0000255" key="1">
    <source>
        <dbReference type="HAMAP-Rule" id="MF_01638"/>
    </source>
</evidence>
<reference key="1">
    <citation type="journal article" date="2005" name="Nucleic Acids Res.">
        <title>Genome dynamics and diversity of Shigella species, the etiologic agents of bacillary dysentery.</title>
        <authorList>
            <person name="Yang F."/>
            <person name="Yang J."/>
            <person name="Zhang X."/>
            <person name="Chen L."/>
            <person name="Jiang Y."/>
            <person name="Yan Y."/>
            <person name="Tang X."/>
            <person name="Wang J."/>
            <person name="Xiong Z."/>
            <person name="Dong J."/>
            <person name="Xue Y."/>
            <person name="Zhu Y."/>
            <person name="Xu X."/>
            <person name="Sun L."/>
            <person name="Chen S."/>
            <person name="Nie H."/>
            <person name="Peng J."/>
            <person name="Xu J."/>
            <person name="Wang Y."/>
            <person name="Yuan Z."/>
            <person name="Wen Y."/>
            <person name="Yao Z."/>
            <person name="Shen Y."/>
            <person name="Qiang B."/>
            <person name="Hou Y."/>
            <person name="Yu J."/>
            <person name="Jin Q."/>
        </authorList>
    </citation>
    <scope>NUCLEOTIDE SEQUENCE [LARGE SCALE GENOMIC DNA]</scope>
    <source>
        <strain>Sd197</strain>
    </source>
</reference>
<proteinExistence type="inferred from homology"/>
<name>PDXK_SHIDS</name>